<feature type="chain" id="PRO_1000079717" description="GTPase Era">
    <location>
        <begin position="1"/>
        <end position="300"/>
    </location>
</feature>
<feature type="domain" description="Era-type G" evidence="2">
    <location>
        <begin position="6"/>
        <end position="173"/>
    </location>
</feature>
<feature type="domain" description="KH type-2" evidence="1">
    <location>
        <begin position="204"/>
        <end position="281"/>
    </location>
</feature>
<feature type="region of interest" description="G1" evidence="2">
    <location>
        <begin position="14"/>
        <end position="21"/>
    </location>
</feature>
<feature type="region of interest" description="G2" evidence="2">
    <location>
        <begin position="40"/>
        <end position="44"/>
    </location>
</feature>
<feature type="region of interest" description="G3" evidence="2">
    <location>
        <begin position="61"/>
        <end position="64"/>
    </location>
</feature>
<feature type="region of interest" description="G4" evidence="2">
    <location>
        <begin position="123"/>
        <end position="126"/>
    </location>
</feature>
<feature type="region of interest" description="G5" evidence="2">
    <location>
        <begin position="152"/>
        <end position="154"/>
    </location>
</feature>
<feature type="binding site" evidence="1">
    <location>
        <begin position="14"/>
        <end position="21"/>
    </location>
    <ligand>
        <name>GTP</name>
        <dbReference type="ChEBI" id="CHEBI:37565"/>
    </ligand>
</feature>
<feature type="binding site" evidence="1">
    <location>
        <begin position="61"/>
        <end position="65"/>
    </location>
    <ligand>
        <name>GTP</name>
        <dbReference type="ChEBI" id="CHEBI:37565"/>
    </ligand>
</feature>
<feature type="binding site" evidence="1">
    <location>
        <begin position="123"/>
        <end position="126"/>
    </location>
    <ligand>
        <name>GTP</name>
        <dbReference type="ChEBI" id="CHEBI:37565"/>
    </ligand>
</feature>
<name>ERA_OCEIH</name>
<accession>Q8EPY0</accession>
<comment type="function">
    <text evidence="1">An essential GTPase that binds both GDP and GTP, with rapid nucleotide exchange. Plays a role in 16S rRNA processing and 30S ribosomal subunit biogenesis and possibly also in cell cycle regulation and energy metabolism.</text>
</comment>
<comment type="subunit">
    <text evidence="1">Monomer.</text>
</comment>
<comment type="subcellular location">
    <subcellularLocation>
        <location>Cytoplasm</location>
    </subcellularLocation>
    <subcellularLocation>
        <location evidence="1">Cell membrane</location>
        <topology evidence="1">Peripheral membrane protein</topology>
    </subcellularLocation>
</comment>
<comment type="similarity">
    <text evidence="1 2">Belongs to the TRAFAC class TrmE-Era-EngA-EngB-Septin-like GTPase superfamily. Era GTPase family.</text>
</comment>
<evidence type="ECO:0000255" key="1">
    <source>
        <dbReference type="HAMAP-Rule" id="MF_00367"/>
    </source>
</evidence>
<evidence type="ECO:0000255" key="2">
    <source>
        <dbReference type="PROSITE-ProRule" id="PRU01050"/>
    </source>
</evidence>
<sequence length="300" mass="34434">METNFKSGFLSIIGRPNVGKSTFMNKVIGQKIAIMSDKAQTTRNKIQGVFTTNDAQMIFIDTPGIHKPKHRLGDFMVQIAEDTLNEVDSILFMINADEGYGRGDQYIIDLLQKVNSPVFLIINKIDLIHPDQLLPLIEKYKSLYDFEEIIPISALEGNNVDHLVDVLKEHLPEGPQYYPEDQVTDHPERFVISELIREKVLHLTKEEVPHSIAVVIENIEKNENEKLLIQATIVTERSSQKGILIGKQGTMLKNIGKQARRDIEALLGSKVYLELWIKVKKDWRNRQNQLHEFGFRSDEY</sequence>
<dbReference type="EMBL" id="BA000028">
    <property type="protein sequence ID" value="BAC13907.1"/>
    <property type="molecule type" value="Genomic_DNA"/>
</dbReference>
<dbReference type="RefSeq" id="WP_011066348.1">
    <property type="nucleotide sequence ID" value="NC_004193.1"/>
</dbReference>
<dbReference type="SMR" id="Q8EPY0"/>
<dbReference type="STRING" id="221109.gene:10734197"/>
<dbReference type="KEGG" id="oih:OB1951"/>
<dbReference type="eggNOG" id="COG1159">
    <property type="taxonomic scope" value="Bacteria"/>
</dbReference>
<dbReference type="HOGENOM" id="CLU_038009_1_0_9"/>
<dbReference type="OrthoDB" id="9805918at2"/>
<dbReference type="PhylomeDB" id="Q8EPY0"/>
<dbReference type="Proteomes" id="UP000000822">
    <property type="component" value="Chromosome"/>
</dbReference>
<dbReference type="GO" id="GO:0005829">
    <property type="term" value="C:cytosol"/>
    <property type="evidence" value="ECO:0007669"/>
    <property type="project" value="TreeGrafter"/>
</dbReference>
<dbReference type="GO" id="GO:0005886">
    <property type="term" value="C:plasma membrane"/>
    <property type="evidence" value="ECO:0007669"/>
    <property type="project" value="UniProtKB-SubCell"/>
</dbReference>
<dbReference type="GO" id="GO:0005525">
    <property type="term" value="F:GTP binding"/>
    <property type="evidence" value="ECO:0007669"/>
    <property type="project" value="UniProtKB-UniRule"/>
</dbReference>
<dbReference type="GO" id="GO:0003924">
    <property type="term" value="F:GTPase activity"/>
    <property type="evidence" value="ECO:0007669"/>
    <property type="project" value="UniProtKB-UniRule"/>
</dbReference>
<dbReference type="GO" id="GO:0043024">
    <property type="term" value="F:ribosomal small subunit binding"/>
    <property type="evidence" value="ECO:0007669"/>
    <property type="project" value="TreeGrafter"/>
</dbReference>
<dbReference type="GO" id="GO:0070181">
    <property type="term" value="F:small ribosomal subunit rRNA binding"/>
    <property type="evidence" value="ECO:0007669"/>
    <property type="project" value="UniProtKB-UniRule"/>
</dbReference>
<dbReference type="GO" id="GO:0000028">
    <property type="term" value="P:ribosomal small subunit assembly"/>
    <property type="evidence" value="ECO:0007669"/>
    <property type="project" value="TreeGrafter"/>
</dbReference>
<dbReference type="CDD" id="cd04163">
    <property type="entry name" value="Era"/>
    <property type="match status" value="1"/>
</dbReference>
<dbReference type="CDD" id="cd22534">
    <property type="entry name" value="KH-II_Era"/>
    <property type="match status" value="1"/>
</dbReference>
<dbReference type="FunFam" id="3.30.300.20:FF:000003">
    <property type="entry name" value="GTPase Era"/>
    <property type="match status" value="1"/>
</dbReference>
<dbReference type="FunFam" id="3.40.50.300:FF:000094">
    <property type="entry name" value="GTPase Era"/>
    <property type="match status" value="1"/>
</dbReference>
<dbReference type="Gene3D" id="3.30.300.20">
    <property type="match status" value="1"/>
</dbReference>
<dbReference type="Gene3D" id="3.40.50.300">
    <property type="entry name" value="P-loop containing nucleotide triphosphate hydrolases"/>
    <property type="match status" value="1"/>
</dbReference>
<dbReference type="HAMAP" id="MF_00367">
    <property type="entry name" value="GTPase_Era"/>
    <property type="match status" value="1"/>
</dbReference>
<dbReference type="InterPro" id="IPR030388">
    <property type="entry name" value="G_ERA_dom"/>
</dbReference>
<dbReference type="InterPro" id="IPR006073">
    <property type="entry name" value="GTP-bd"/>
</dbReference>
<dbReference type="InterPro" id="IPR005662">
    <property type="entry name" value="GTPase_Era-like"/>
</dbReference>
<dbReference type="InterPro" id="IPR015946">
    <property type="entry name" value="KH_dom-like_a/b"/>
</dbReference>
<dbReference type="InterPro" id="IPR004044">
    <property type="entry name" value="KH_dom_type_2"/>
</dbReference>
<dbReference type="InterPro" id="IPR009019">
    <property type="entry name" value="KH_sf_prok-type"/>
</dbReference>
<dbReference type="InterPro" id="IPR027417">
    <property type="entry name" value="P-loop_NTPase"/>
</dbReference>
<dbReference type="InterPro" id="IPR005225">
    <property type="entry name" value="Small_GTP-bd"/>
</dbReference>
<dbReference type="NCBIfam" id="TIGR00436">
    <property type="entry name" value="era"/>
    <property type="match status" value="1"/>
</dbReference>
<dbReference type="NCBIfam" id="NF000908">
    <property type="entry name" value="PRK00089.1"/>
    <property type="match status" value="1"/>
</dbReference>
<dbReference type="NCBIfam" id="TIGR00231">
    <property type="entry name" value="small_GTP"/>
    <property type="match status" value="1"/>
</dbReference>
<dbReference type="PANTHER" id="PTHR42698">
    <property type="entry name" value="GTPASE ERA"/>
    <property type="match status" value="1"/>
</dbReference>
<dbReference type="PANTHER" id="PTHR42698:SF1">
    <property type="entry name" value="GTPASE ERA, MITOCHONDRIAL"/>
    <property type="match status" value="1"/>
</dbReference>
<dbReference type="Pfam" id="PF07650">
    <property type="entry name" value="KH_2"/>
    <property type="match status" value="1"/>
</dbReference>
<dbReference type="Pfam" id="PF01926">
    <property type="entry name" value="MMR_HSR1"/>
    <property type="match status" value="1"/>
</dbReference>
<dbReference type="SUPFAM" id="SSF52540">
    <property type="entry name" value="P-loop containing nucleoside triphosphate hydrolases"/>
    <property type="match status" value="1"/>
</dbReference>
<dbReference type="SUPFAM" id="SSF54814">
    <property type="entry name" value="Prokaryotic type KH domain (KH-domain type II)"/>
    <property type="match status" value="1"/>
</dbReference>
<dbReference type="PROSITE" id="PS51713">
    <property type="entry name" value="G_ERA"/>
    <property type="match status" value="1"/>
</dbReference>
<dbReference type="PROSITE" id="PS50823">
    <property type="entry name" value="KH_TYPE_2"/>
    <property type="match status" value="1"/>
</dbReference>
<proteinExistence type="inferred from homology"/>
<keyword id="KW-1003">Cell membrane</keyword>
<keyword id="KW-0963">Cytoplasm</keyword>
<keyword id="KW-0342">GTP-binding</keyword>
<keyword id="KW-0472">Membrane</keyword>
<keyword id="KW-0547">Nucleotide-binding</keyword>
<keyword id="KW-1185">Reference proteome</keyword>
<keyword id="KW-0690">Ribosome biogenesis</keyword>
<keyword id="KW-0694">RNA-binding</keyword>
<keyword id="KW-0699">rRNA-binding</keyword>
<organism>
    <name type="scientific">Oceanobacillus iheyensis (strain DSM 14371 / CIP 107618 / JCM 11309 / KCTC 3954 / HTE831)</name>
    <dbReference type="NCBI Taxonomy" id="221109"/>
    <lineage>
        <taxon>Bacteria</taxon>
        <taxon>Bacillati</taxon>
        <taxon>Bacillota</taxon>
        <taxon>Bacilli</taxon>
        <taxon>Bacillales</taxon>
        <taxon>Bacillaceae</taxon>
        <taxon>Oceanobacillus</taxon>
    </lineage>
</organism>
<protein>
    <recommendedName>
        <fullName evidence="1">GTPase Era</fullName>
    </recommendedName>
</protein>
<gene>
    <name evidence="1" type="primary">era</name>
    <name type="ordered locus">OB1951</name>
</gene>
<reference key="1">
    <citation type="journal article" date="2002" name="Nucleic Acids Res.">
        <title>Genome sequence of Oceanobacillus iheyensis isolated from the Iheya Ridge and its unexpected adaptive capabilities to extreme environments.</title>
        <authorList>
            <person name="Takami H."/>
            <person name="Takaki Y."/>
            <person name="Uchiyama I."/>
        </authorList>
    </citation>
    <scope>NUCLEOTIDE SEQUENCE [LARGE SCALE GENOMIC DNA]</scope>
    <source>
        <strain>DSM 14371 / CIP 107618 / JCM 11309 / KCTC 3954 / HTE831</strain>
    </source>
</reference>